<protein>
    <recommendedName>
        <fullName evidence="1">CinA-like protein</fullName>
    </recommendedName>
</protein>
<comment type="similarity">
    <text evidence="1">Belongs to the CinA family.</text>
</comment>
<proteinExistence type="inferred from homology"/>
<reference key="1">
    <citation type="journal article" date="2016" name="Front. Microbiol.">
        <title>The complete genome sequence of hyperthermophile Dictyoglomus turgidum DSM 6724 reveals a specialized carbohydrate fermentor.</title>
        <authorList>
            <person name="Brumm P.J."/>
            <person name="Gowda K."/>
            <person name="Robb F.T."/>
            <person name="Mead D.A."/>
        </authorList>
    </citation>
    <scope>NUCLEOTIDE SEQUENCE [LARGE SCALE GENOMIC DNA]</scope>
    <source>
        <strain>DSM 6724 / Z-1310</strain>
    </source>
</reference>
<sequence length="411" mass="45246">MRCEILSVGTELLLGDILNTNAQYLSRRLADLGIPVYFHTTVGDNPERLKKALEIAFSRSDMVIATGGLGPTQDDLTKEISAEFFNKKLVLHEESLKRIKEFFERRGLNLTEGNIKQAYIIEGSRVIPNDWGTAPGIILEEGGKILILLPGPPKEMIPMFETYVVPYLSTFSSGIIYSKVLRVCGIGESFMEEKVKDLIKSQTNPTIAPYAKEGEAILRITARAKSKEEAEKMIEGVVKEIRKRLGDYIYGEGETSLEEVVVNLLLEKGLTISVAESCTGGLISARLVNVPGVSKVFKGSIIAYDNEVKIKELNVPEEIFKEYGAVSSQCAMKMAEGIAKKMGTDVGLSATGIAGPEGGTLEKPIGLVYIGLYIRGEMSYKELRLSGDRNRIRLYTTINGLDLLRRGLLNL</sequence>
<keyword id="KW-1185">Reference proteome</keyword>
<name>CINAL_DICTD</name>
<dbReference type="EMBL" id="CP001251">
    <property type="protein sequence ID" value="ACK41402.1"/>
    <property type="molecule type" value="Genomic_DNA"/>
</dbReference>
<dbReference type="RefSeq" id="WP_012582488.1">
    <property type="nucleotide sequence ID" value="NC_011661.1"/>
</dbReference>
<dbReference type="RefSeq" id="YP_002352016.1">
    <property type="nucleotide sequence ID" value="NC_011661.1"/>
</dbReference>
<dbReference type="SMR" id="B8DYM0"/>
<dbReference type="FunCoup" id="B8DYM0">
    <property type="interactions" value="140"/>
</dbReference>
<dbReference type="STRING" id="515635.Dtur_0064"/>
<dbReference type="EnsemblBacteria" id="ACK41402">
    <property type="protein sequence ID" value="ACK41402"/>
    <property type="gene ID" value="Dtur_0064"/>
</dbReference>
<dbReference type="KEGG" id="dtu:Dtur_0064"/>
<dbReference type="PATRIC" id="fig|515635.4.peg.65"/>
<dbReference type="eggNOG" id="COG1058">
    <property type="taxonomic scope" value="Bacteria"/>
</dbReference>
<dbReference type="eggNOG" id="COG1546">
    <property type="taxonomic scope" value="Bacteria"/>
</dbReference>
<dbReference type="HOGENOM" id="CLU_030805_9_3_0"/>
<dbReference type="InParanoid" id="B8DYM0"/>
<dbReference type="OrthoDB" id="9801454at2"/>
<dbReference type="Proteomes" id="UP000007719">
    <property type="component" value="Chromosome"/>
</dbReference>
<dbReference type="CDD" id="cd00885">
    <property type="entry name" value="cinA"/>
    <property type="match status" value="1"/>
</dbReference>
<dbReference type="Gene3D" id="3.30.70.2860">
    <property type="match status" value="1"/>
</dbReference>
<dbReference type="Gene3D" id="3.90.950.20">
    <property type="entry name" value="CinA-like"/>
    <property type="match status" value="1"/>
</dbReference>
<dbReference type="Gene3D" id="3.40.980.10">
    <property type="entry name" value="MoaB/Mog-like domain"/>
    <property type="match status" value="1"/>
</dbReference>
<dbReference type="HAMAP" id="MF_00226_B">
    <property type="entry name" value="CinA_B"/>
    <property type="match status" value="1"/>
</dbReference>
<dbReference type="InterPro" id="IPR050101">
    <property type="entry name" value="CinA"/>
</dbReference>
<dbReference type="InterPro" id="IPR036653">
    <property type="entry name" value="CinA-like_C"/>
</dbReference>
<dbReference type="InterPro" id="IPR008136">
    <property type="entry name" value="CinA_C"/>
</dbReference>
<dbReference type="InterPro" id="IPR041424">
    <property type="entry name" value="CinA_KH"/>
</dbReference>
<dbReference type="InterPro" id="IPR008135">
    <property type="entry name" value="Competence-induced_CinA"/>
</dbReference>
<dbReference type="InterPro" id="IPR036425">
    <property type="entry name" value="MoaB/Mog-like_dom_sf"/>
</dbReference>
<dbReference type="InterPro" id="IPR001453">
    <property type="entry name" value="MoaB/Mog_dom"/>
</dbReference>
<dbReference type="NCBIfam" id="TIGR00200">
    <property type="entry name" value="cinA_nterm"/>
    <property type="match status" value="1"/>
</dbReference>
<dbReference type="NCBIfam" id="TIGR00177">
    <property type="entry name" value="molyb_syn"/>
    <property type="match status" value="1"/>
</dbReference>
<dbReference type="NCBIfam" id="TIGR00199">
    <property type="entry name" value="PncC_domain"/>
    <property type="match status" value="1"/>
</dbReference>
<dbReference type="NCBIfam" id="NF001813">
    <property type="entry name" value="PRK00549.1"/>
    <property type="match status" value="1"/>
</dbReference>
<dbReference type="PANTHER" id="PTHR13939">
    <property type="entry name" value="NICOTINAMIDE-NUCLEOTIDE AMIDOHYDROLASE PNCC"/>
    <property type="match status" value="1"/>
</dbReference>
<dbReference type="PANTHER" id="PTHR13939:SF0">
    <property type="entry name" value="NMN AMIDOHYDROLASE-LIKE PROTEIN YFAY"/>
    <property type="match status" value="1"/>
</dbReference>
<dbReference type="Pfam" id="PF02464">
    <property type="entry name" value="CinA"/>
    <property type="match status" value="1"/>
</dbReference>
<dbReference type="Pfam" id="PF18146">
    <property type="entry name" value="CinA_KH"/>
    <property type="match status" value="1"/>
</dbReference>
<dbReference type="Pfam" id="PF00994">
    <property type="entry name" value="MoCF_biosynth"/>
    <property type="match status" value="1"/>
</dbReference>
<dbReference type="PIRSF" id="PIRSF006728">
    <property type="entry name" value="CinA"/>
    <property type="match status" value="1"/>
</dbReference>
<dbReference type="SMART" id="SM00852">
    <property type="entry name" value="MoCF_biosynth"/>
    <property type="match status" value="1"/>
</dbReference>
<dbReference type="SUPFAM" id="SSF142433">
    <property type="entry name" value="CinA-like"/>
    <property type="match status" value="1"/>
</dbReference>
<dbReference type="SUPFAM" id="SSF53218">
    <property type="entry name" value="Molybdenum cofactor biosynthesis proteins"/>
    <property type="match status" value="1"/>
</dbReference>
<organism>
    <name type="scientific">Dictyoglomus turgidum (strain DSM 6724 / Z-1310)</name>
    <dbReference type="NCBI Taxonomy" id="515635"/>
    <lineage>
        <taxon>Bacteria</taxon>
        <taxon>Pseudomonadati</taxon>
        <taxon>Dictyoglomota</taxon>
        <taxon>Dictyoglomia</taxon>
        <taxon>Dictyoglomales</taxon>
        <taxon>Dictyoglomaceae</taxon>
        <taxon>Dictyoglomus</taxon>
    </lineage>
</organism>
<gene>
    <name type="ordered locus">Dtur_0064</name>
</gene>
<feature type="chain" id="PRO_1000118919" description="CinA-like protein">
    <location>
        <begin position="1"/>
        <end position="411"/>
    </location>
</feature>
<evidence type="ECO:0000255" key="1">
    <source>
        <dbReference type="HAMAP-Rule" id="MF_00226"/>
    </source>
</evidence>
<accession>B8DYM0</accession>